<dbReference type="GO" id="GO:0005576">
    <property type="term" value="C:extracellular region"/>
    <property type="evidence" value="ECO:0007669"/>
    <property type="project" value="UniProtKB-SubCell"/>
</dbReference>
<evidence type="ECO:0000269" key="1">
    <source>
    </source>
</evidence>
<evidence type="ECO:0000303" key="2">
    <source>
    </source>
</evidence>
<evidence type="ECO:0000305" key="3"/>
<sequence length="10" mass="1290">KPEEDWDRTD</sequence>
<proteinExistence type="evidence at protein level"/>
<organism>
    <name type="scientific">Phasmahyla jandaia</name>
    <name type="common">Jandaia leaf frog</name>
    <name type="synonym">Phyllomedusa jandaia</name>
    <dbReference type="NCBI Taxonomy" id="762504"/>
    <lineage>
        <taxon>Eukaryota</taxon>
        <taxon>Metazoa</taxon>
        <taxon>Chordata</taxon>
        <taxon>Craniata</taxon>
        <taxon>Vertebrata</taxon>
        <taxon>Euteleostomi</taxon>
        <taxon>Amphibia</taxon>
        <taxon>Batrachia</taxon>
        <taxon>Anura</taxon>
        <taxon>Neobatrachia</taxon>
        <taxon>Hyloidea</taxon>
        <taxon>Hylidae</taxon>
        <taxon>Phyllomedusinae</taxon>
        <taxon>Phasmahyla</taxon>
    </lineage>
</organism>
<name>SSP14_PHAJA</name>
<accession>P86605</accession>
<keyword id="KW-0903">Direct protein sequencing</keyword>
<keyword id="KW-0964">Secreted</keyword>
<reference evidence="3" key="1">
    <citation type="journal article" date="2011" name="Toxicon">
        <title>Peptidomic dissection of the skin secretion of Phasmahyla jandaia (Bokermann and Sazima, 1978) (Anura, Hylidae, Phyllomedusinae).</title>
        <authorList>
            <person name="Rates B."/>
            <person name="Silva L.P."/>
            <person name="Ireno I.C."/>
            <person name="Leite F.S."/>
            <person name="Borges M.H."/>
            <person name="Bloch C. Jr."/>
            <person name="De Lima M.E."/>
            <person name="Pimenta A.M."/>
        </authorList>
    </citation>
    <scope>PROTEIN SEQUENCE</scope>
    <scope>SUBCELLULAR LOCATION</scope>
    <scope>TISSUE SPECIFICITY</scope>
    <scope>MASS SPECTROMETRY</scope>
    <source>
        <tissue evidence="1">Skin secretion</tissue>
    </source>
</reference>
<comment type="subcellular location">
    <subcellularLocation>
        <location evidence="1">Secreted</location>
    </subcellularLocation>
</comment>
<comment type="tissue specificity">
    <text evidence="1">Expressed by the skin glands.</text>
</comment>
<comment type="mass spectrometry" mass="1289.6" method="MALDI" evidence="1"/>
<protein>
    <recommendedName>
        <fullName evidence="2">Skin secreted peptide P1-4</fullName>
        <shortName evidence="2">PjP1-4</shortName>
    </recommendedName>
</protein>
<feature type="peptide" id="PRO_0000404642" description="Skin secreted peptide P1-4" evidence="1">
    <location>
        <begin position="1"/>
        <end position="10"/>
    </location>
</feature>
<feature type="unsure residue" description="K or Q" evidence="1">
    <location>
        <position position="1"/>
    </location>
</feature>